<proteinExistence type="inferred from homology"/>
<gene>
    <name evidence="1" type="primary">anmK</name>
    <name type="ordered locus">VP0544</name>
</gene>
<name>ANMK_VIBPA</name>
<accession>Q87S80</accession>
<feature type="chain" id="PRO_0000250080" description="Anhydro-N-acetylmuramic acid kinase">
    <location>
        <begin position="1"/>
        <end position="370"/>
    </location>
</feature>
<feature type="binding site" evidence="1">
    <location>
        <begin position="13"/>
        <end position="20"/>
    </location>
    <ligand>
        <name>ATP</name>
        <dbReference type="ChEBI" id="CHEBI:30616"/>
    </ligand>
</feature>
<evidence type="ECO:0000255" key="1">
    <source>
        <dbReference type="HAMAP-Rule" id="MF_01270"/>
    </source>
</evidence>
<keyword id="KW-0067">ATP-binding</keyword>
<keyword id="KW-0119">Carbohydrate metabolism</keyword>
<keyword id="KW-0418">Kinase</keyword>
<keyword id="KW-0547">Nucleotide-binding</keyword>
<keyword id="KW-0808">Transferase</keyword>
<sequence length="370" mass="40306">MKFNELYIGVMSGTSMDGVDTALVEITDNHVRLIAHGDYPMPAAMKEMLLSVCTGQATNLKAIGELDHQLGHLFADAVLQLLNKSGYVAEQIRAIGNHGQTVFHQPTGDLPFTTQLGDANIIAVKTGIDTVADFRRKDMALGGQGAPLVPAFHKSIFAMQDSTTVVLNIGGIANISVLHPQQPVHGYDTGPGNMLMDAWCERHTGHGFDKDAQLALRGSVNEALLAHLLKEPYLAMSAPKSTGRELFNMDWLHHQLANYDVSVEDVQRTLCEYTAITIAHDVTKFTYGETPQLLVCGGGARNPLLMQRLAELLPQWHVTTTTDKGVDGDYMEAMAFAWLAQRHIHDLPSNLPEVTGASRLASLGVLYSKN</sequence>
<comment type="function">
    <text evidence="1">Catalyzes the specific phosphorylation of 1,6-anhydro-N-acetylmuramic acid (anhMurNAc) with the simultaneous cleavage of the 1,6-anhydro ring, generating MurNAc-6-P. Is required for the utilization of anhMurNAc either imported from the medium or derived from its own cell wall murein, and thus plays a role in cell wall recycling.</text>
</comment>
<comment type="catalytic activity">
    <reaction evidence="1">
        <text>1,6-anhydro-N-acetyl-beta-muramate + ATP + H2O = N-acetyl-D-muramate 6-phosphate + ADP + H(+)</text>
        <dbReference type="Rhea" id="RHEA:24952"/>
        <dbReference type="ChEBI" id="CHEBI:15377"/>
        <dbReference type="ChEBI" id="CHEBI:15378"/>
        <dbReference type="ChEBI" id="CHEBI:30616"/>
        <dbReference type="ChEBI" id="CHEBI:58690"/>
        <dbReference type="ChEBI" id="CHEBI:58722"/>
        <dbReference type="ChEBI" id="CHEBI:456216"/>
        <dbReference type="EC" id="2.7.1.170"/>
    </reaction>
</comment>
<comment type="pathway">
    <text evidence="1">Amino-sugar metabolism; 1,6-anhydro-N-acetylmuramate degradation.</text>
</comment>
<comment type="pathway">
    <text evidence="1">Cell wall biogenesis; peptidoglycan recycling.</text>
</comment>
<comment type="similarity">
    <text evidence="1">Belongs to the anhydro-N-acetylmuramic acid kinase family.</text>
</comment>
<dbReference type="EC" id="2.7.1.170" evidence="1"/>
<dbReference type="EMBL" id="BA000031">
    <property type="protein sequence ID" value="BAC58807.1"/>
    <property type="molecule type" value="Genomic_DNA"/>
</dbReference>
<dbReference type="RefSeq" id="NP_796923.1">
    <property type="nucleotide sequence ID" value="NC_004603.1"/>
</dbReference>
<dbReference type="RefSeq" id="WP_005477894.1">
    <property type="nucleotide sequence ID" value="NC_004603.1"/>
</dbReference>
<dbReference type="SMR" id="Q87S80"/>
<dbReference type="GeneID" id="1188012"/>
<dbReference type="KEGG" id="vpa:VP0544"/>
<dbReference type="PATRIC" id="fig|223926.6.peg.517"/>
<dbReference type="eggNOG" id="COG2377">
    <property type="taxonomic scope" value="Bacteria"/>
</dbReference>
<dbReference type="HOGENOM" id="CLU_038782_0_0_6"/>
<dbReference type="UniPathway" id="UPA00343"/>
<dbReference type="UniPathway" id="UPA00544"/>
<dbReference type="Proteomes" id="UP000002493">
    <property type="component" value="Chromosome 1"/>
</dbReference>
<dbReference type="GO" id="GO:0005524">
    <property type="term" value="F:ATP binding"/>
    <property type="evidence" value="ECO:0007669"/>
    <property type="project" value="UniProtKB-UniRule"/>
</dbReference>
<dbReference type="GO" id="GO:0016301">
    <property type="term" value="F:kinase activity"/>
    <property type="evidence" value="ECO:0007669"/>
    <property type="project" value="UniProtKB-KW"/>
</dbReference>
<dbReference type="GO" id="GO:0016773">
    <property type="term" value="F:phosphotransferase activity, alcohol group as acceptor"/>
    <property type="evidence" value="ECO:0007669"/>
    <property type="project" value="UniProtKB-UniRule"/>
</dbReference>
<dbReference type="GO" id="GO:0097175">
    <property type="term" value="P:1,6-anhydro-N-acetyl-beta-muramic acid catabolic process"/>
    <property type="evidence" value="ECO:0007669"/>
    <property type="project" value="UniProtKB-UniRule"/>
</dbReference>
<dbReference type="GO" id="GO:0006040">
    <property type="term" value="P:amino sugar metabolic process"/>
    <property type="evidence" value="ECO:0007669"/>
    <property type="project" value="InterPro"/>
</dbReference>
<dbReference type="GO" id="GO:0009254">
    <property type="term" value="P:peptidoglycan turnover"/>
    <property type="evidence" value="ECO:0007669"/>
    <property type="project" value="UniProtKB-UniRule"/>
</dbReference>
<dbReference type="CDD" id="cd24050">
    <property type="entry name" value="ASKHA_NBD_ANMK"/>
    <property type="match status" value="1"/>
</dbReference>
<dbReference type="Gene3D" id="3.30.420.40">
    <property type="match status" value="2"/>
</dbReference>
<dbReference type="HAMAP" id="MF_01270">
    <property type="entry name" value="AnhMurNAc_kinase"/>
    <property type="match status" value="1"/>
</dbReference>
<dbReference type="InterPro" id="IPR005338">
    <property type="entry name" value="Anhydro_N_Ac-Mur_kinase"/>
</dbReference>
<dbReference type="InterPro" id="IPR043129">
    <property type="entry name" value="ATPase_NBD"/>
</dbReference>
<dbReference type="NCBIfam" id="NF007139">
    <property type="entry name" value="PRK09585.1-3"/>
    <property type="match status" value="1"/>
</dbReference>
<dbReference type="NCBIfam" id="NF007148">
    <property type="entry name" value="PRK09585.3-2"/>
    <property type="match status" value="1"/>
</dbReference>
<dbReference type="PANTHER" id="PTHR30605">
    <property type="entry name" value="ANHYDRO-N-ACETYLMURAMIC ACID KINASE"/>
    <property type="match status" value="1"/>
</dbReference>
<dbReference type="PANTHER" id="PTHR30605:SF0">
    <property type="entry name" value="ANHYDRO-N-ACETYLMURAMIC ACID KINASE"/>
    <property type="match status" value="1"/>
</dbReference>
<dbReference type="Pfam" id="PF03702">
    <property type="entry name" value="AnmK"/>
    <property type="match status" value="1"/>
</dbReference>
<dbReference type="SUPFAM" id="SSF53067">
    <property type="entry name" value="Actin-like ATPase domain"/>
    <property type="match status" value="1"/>
</dbReference>
<protein>
    <recommendedName>
        <fullName evidence="1">Anhydro-N-acetylmuramic acid kinase</fullName>
        <ecNumber evidence="1">2.7.1.170</ecNumber>
    </recommendedName>
    <alternativeName>
        <fullName evidence="1">AnhMurNAc kinase</fullName>
    </alternativeName>
</protein>
<organism>
    <name type="scientific">Vibrio parahaemolyticus serotype O3:K6 (strain RIMD 2210633)</name>
    <dbReference type="NCBI Taxonomy" id="223926"/>
    <lineage>
        <taxon>Bacteria</taxon>
        <taxon>Pseudomonadati</taxon>
        <taxon>Pseudomonadota</taxon>
        <taxon>Gammaproteobacteria</taxon>
        <taxon>Vibrionales</taxon>
        <taxon>Vibrionaceae</taxon>
        <taxon>Vibrio</taxon>
    </lineage>
</organism>
<reference key="1">
    <citation type="journal article" date="2003" name="Lancet">
        <title>Genome sequence of Vibrio parahaemolyticus: a pathogenic mechanism distinct from that of V. cholerae.</title>
        <authorList>
            <person name="Makino K."/>
            <person name="Oshima K."/>
            <person name="Kurokawa K."/>
            <person name="Yokoyama K."/>
            <person name="Uda T."/>
            <person name="Tagomori K."/>
            <person name="Iijima Y."/>
            <person name="Najima M."/>
            <person name="Nakano M."/>
            <person name="Yamashita A."/>
            <person name="Kubota Y."/>
            <person name="Kimura S."/>
            <person name="Yasunaga T."/>
            <person name="Honda T."/>
            <person name="Shinagawa H."/>
            <person name="Hattori M."/>
            <person name="Iida T."/>
        </authorList>
    </citation>
    <scope>NUCLEOTIDE SEQUENCE [LARGE SCALE GENOMIC DNA]</scope>
    <source>
        <strain>RIMD 2210633</strain>
    </source>
</reference>